<organism>
    <name type="scientific">Bos taurus</name>
    <name type="common">Bovine</name>
    <dbReference type="NCBI Taxonomy" id="9913"/>
    <lineage>
        <taxon>Eukaryota</taxon>
        <taxon>Metazoa</taxon>
        <taxon>Chordata</taxon>
        <taxon>Craniata</taxon>
        <taxon>Vertebrata</taxon>
        <taxon>Euteleostomi</taxon>
        <taxon>Mammalia</taxon>
        <taxon>Eutheria</taxon>
        <taxon>Laurasiatheria</taxon>
        <taxon>Artiodactyla</taxon>
        <taxon>Ruminantia</taxon>
        <taxon>Pecora</taxon>
        <taxon>Bovidae</taxon>
        <taxon>Bovinae</taxon>
        <taxon>Bos</taxon>
    </lineage>
</organism>
<keyword id="KW-0012">Acyltransferase</keyword>
<keyword id="KW-0256">Endoplasmic reticulum</keyword>
<keyword id="KW-0444">Lipid biosynthesis</keyword>
<keyword id="KW-0443">Lipid metabolism</keyword>
<keyword id="KW-0472">Membrane</keyword>
<keyword id="KW-0594">Phospholipid biosynthesis</keyword>
<keyword id="KW-1208">Phospholipid metabolism</keyword>
<keyword id="KW-1185">Reference proteome</keyword>
<keyword id="KW-0808">Transferase</keyword>
<keyword id="KW-0812">Transmembrane</keyword>
<keyword id="KW-1133">Transmembrane helix</keyword>
<accession>Q5E9R2</accession>
<accession>Q5EA78</accession>
<evidence type="ECO:0000250" key="1">
    <source>
        <dbReference type="UniProtKB" id="Q8K4X7"/>
    </source>
</evidence>
<evidence type="ECO:0000250" key="2">
    <source>
        <dbReference type="UniProtKB" id="Q9D517"/>
    </source>
</evidence>
<evidence type="ECO:0000255" key="3"/>
<evidence type="ECO:0000305" key="4"/>
<name>PLCD_BOVIN</name>
<sequence length="378" mass="43907">MDLVALLKSHFLCHLIFCYVFIVSGLIINTIQLCTLLLWPVNKQLFRKINCRLSYCVSSQLVMLLEWWSGTECVIYTDPRAYPKYGKENAIVVLNHKFEIDFLCGWSLAERFGVLGGSKVLAKKELAYVPIIGWMWYFTEMVFCTRKWEQDRKTVSESLLHLRDYPEKYFFLIHCEGTRFTEKKHQISMQVAQAKGLPSLKHHLLPRTKGFAVTVRSLRNVVSAVYDCTLNFRNNENPTLLGVLNGKKYHADLYVRRIPLEEVPEEEDKCAAWLHKLYQEKDAFQEEYSRTGTFPETPVVPPRRPWTLVNWLFWASMLLYPFFRFVINMVSSGSSLTLASFVLVFFVASMGVRWMIGVTEIDKGSAYGNMDSKQKHSD</sequence>
<reference key="1">
    <citation type="journal article" date="2005" name="BMC Genomics">
        <title>Characterization of 954 bovine full-CDS cDNA sequences.</title>
        <authorList>
            <person name="Harhay G.P."/>
            <person name="Sonstegard T.S."/>
            <person name="Keele J.W."/>
            <person name="Heaton M.P."/>
            <person name="Clawson M.L."/>
            <person name="Snelling W.M."/>
            <person name="Wiedmann R.T."/>
            <person name="Van Tassell C.P."/>
            <person name="Smith T.P.L."/>
        </authorList>
    </citation>
    <scope>NUCLEOTIDE SEQUENCE [LARGE SCALE MRNA]</scope>
</reference>
<proteinExistence type="evidence at transcript level"/>
<protein>
    <recommendedName>
        <fullName>1-acyl-sn-glycerol-3-phosphate acyltransferase delta</fullName>
        <ecNumber evidence="1">2.3.1.51</ecNumber>
    </recommendedName>
    <alternativeName>
        <fullName>1-acylglycerol-3-phosphate O-acyltransferase 4</fullName>
        <shortName>1-AGP acyltransferase 4</shortName>
        <shortName>1-AGPAT 4</shortName>
    </alternativeName>
    <alternativeName>
        <fullName>Lysophosphatidic acid acyltransferase delta</fullName>
        <shortName>LPAAT-delta</shortName>
    </alternativeName>
</protein>
<feature type="chain" id="PRO_0000239116" description="1-acyl-sn-glycerol-3-phosphate acyltransferase delta">
    <location>
        <begin position="1"/>
        <end position="378"/>
    </location>
</feature>
<feature type="transmembrane region" description="Helical" evidence="3">
    <location>
        <begin position="11"/>
        <end position="31"/>
    </location>
</feature>
<feature type="transmembrane region" description="Helical" evidence="3">
    <location>
        <begin position="125"/>
        <end position="145"/>
    </location>
</feature>
<feature type="transmembrane region" description="Helical" evidence="3">
    <location>
        <begin position="307"/>
        <end position="327"/>
    </location>
</feature>
<feature type="transmembrane region" description="Helical" evidence="3">
    <location>
        <begin position="338"/>
        <end position="358"/>
    </location>
</feature>
<feature type="short sequence motif" description="HXXXXD motif" evidence="2">
    <location>
        <begin position="96"/>
        <end position="101"/>
    </location>
</feature>
<feature type="sequence conflict" description="In Ref. 1; AAX08708." evidence="4" ref="1">
    <original>R</original>
    <variation>H</variation>
    <location>
        <position position="290"/>
    </location>
</feature>
<feature type="sequence conflict" description="In Ref. 1; AAX08708." evidence="4" ref="1">
    <original>I</original>
    <variation>V</variation>
    <location>
        <position position="327"/>
    </location>
</feature>
<dbReference type="EC" id="2.3.1.51" evidence="1"/>
<dbReference type="EMBL" id="BT020691">
    <property type="protein sequence ID" value="AAX08708.1"/>
    <property type="molecule type" value="mRNA"/>
</dbReference>
<dbReference type="EMBL" id="BT020858">
    <property type="protein sequence ID" value="AAX08875.1"/>
    <property type="molecule type" value="mRNA"/>
</dbReference>
<dbReference type="FunCoup" id="Q5E9R2">
    <property type="interactions" value="2904"/>
</dbReference>
<dbReference type="STRING" id="9913.ENSBTAP00000010089"/>
<dbReference type="PaxDb" id="9913-ENSBTAP00000010089"/>
<dbReference type="eggNOG" id="KOG1505">
    <property type="taxonomic scope" value="Eukaryota"/>
</dbReference>
<dbReference type="InParanoid" id="Q5E9R2"/>
<dbReference type="UniPathway" id="UPA00557">
    <property type="reaction ID" value="UER00613"/>
</dbReference>
<dbReference type="Proteomes" id="UP000009136">
    <property type="component" value="Unplaced"/>
</dbReference>
<dbReference type="GO" id="GO:0012505">
    <property type="term" value="C:endomembrane system"/>
    <property type="evidence" value="ECO:0000318"/>
    <property type="project" value="GO_Central"/>
</dbReference>
<dbReference type="GO" id="GO:0005783">
    <property type="term" value="C:endoplasmic reticulum"/>
    <property type="evidence" value="ECO:0000250"/>
    <property type="project" value="UniProtKB"/>
</dbReference>
<dbReference type="GO" id="GO:0005789">
    <property type="term" value="C:endoplasmic reticulum membrane"/>
    <property type="evidence" value="ECO:0007669"/>
    <property type="project" value="UniProtKB-SubCell"/>
</dbReference>
<dbReference type="GO" id="GO:0005741">
    <property type="term" value="C:mitochondrial outer membrane"/>
    <property type="evidence" value="ECO:0000318"/>
    <property type="project" value="GO_Central"/>
</dbReference>
<dbReference type="GO" id="GO:0003841">
    <property type="term" value="F:1-acylglycerol-3-phosphate O-acyltransferase activity"/>
    <property type="evidence" value="ECO:0000250"/>
    <property type="project" value="UniProtKB"/>
</dbReference>
<dbReference type="GO" id="GO:0016024">
    <property type="term" value="P:CDP-diacylglycerol biosynthetic process"/>
    <property type="evidence" value="ECO:0007669"/>
    <property type="project" value="UniProtKB-UniPathway"/>
</dbReference>
<dbReference type="CDD" id="cd07990">
    <property type="entry name" value="LPLAT_LCLAT1-like"/>
    <property type="match status" value="1"/>
</dbReference>
<dbReference type="InterPro" id="IPR032098">
    <property type="entry name" value="Acyltransf_C"/>
</dbReference>
<dbReference type="InterPro" id="IPR002123">
    <property type="entry name" value="Plipid/glycerol_acylTrfase"/>
</dbReference>
<dbReference type="PANTHER" id="PTHR10983:SF8">
    <property type="entry name" value="1-ACYL-SN-GLYCEROL-3-PHOSPHATE ACYLTRANSFERASE DELTA"/>
    <property type="match status" value="1"/>
</dbReference>
<dbReference type="PANTHER" id="PTHR10983">
    <property type="entry name" value="1-ACYLGLYCEROL-3-PHOSPHATE ACYLTRANSFERASE-RELATED"/>
    <property type="match status" value="1"/>
</dbReference>
<dbReference type="Pfam" id="PF16076">
    <property type="entry name" value="Acyltransf_C"/>
    <property type="match status" value="1"/>
</dbReference>
<dbReference type="Pfam" id="PF01553">
    <property type="entry name" value="Acyltransferase"/>
    <property type="match status" value="1"/>
</dbReference>
<dbReference type="SMART" id="SM00563">
    <property type="entry name" value="PlsC"/>
    <property type="match status" value="1"/>
</dbReference>
<dbReference type="SUPFAM" id="SSF69593">
    <property type="entry name" value="Glycerol-3-phosphate (1)-acyltransferase"/>
    <property type="match status" value="1"/>
</dbReference>
<gene>
    <name type="primary">AGPAT4</name>
</gene>
<comment type="function">
    <text evidence="1">Converts 1-acyl-sn-glycerol-3-phosphate (lysophosphatidic acid or LPA) into 1,2-diacyl-sn-glycerol-3-phosphate (phosphatidic acid or PA) by incorporating an acyl moiety at the sn-2 position of the glycerol backbone (By similarity). Exhibits high acyl-CoA specificity for polyunsaturated fatty acyl-CoA, especially docosahexaenoyl-CoA (22:6-CoA, DHA-CoA) (By similarity).</text>
</comment>
<comment type="catalytic activity">
    <reaction evidence="1">
        <text>a 1-acyl-sn-glycero-3-phosphate + an acyl-CoA = a 1,2-diacyl-sn-glycero-3-phosphate + CoA</text>
        <dbReference type="Rhea" id="RHEA:19709"/>
        <dbReference type="ChEBI" id="CHEBI:57287"/>
        <dbReference type="ChEBI" id="CHEBI:57970"/>
        <dbReference type="ChEBI" id="CHEBI:58342"/>
        <dbReference type="ChEBI" id="CHEBI:58608"/>
        <dbReference type="EC" id="2.3.1.51"/>
    </reaction>
    <physiologicalReaction direction="left-to-right" evidence="1">
        <dbReference type="Rhea" id="RHEA:19710"/>
    </physiologicalReaction>
</comment>
<comment type="catalytic activity">
    <reaction evidence="1">
        <text>(4Z,7Z,10Z,13Z,16Z,19Z)-docosahexaenoyl-CoA + 1-hexadecanoyl-sn-glycero-3-phosphate = 1-hexadecanoyl-2-(4Z,7Z,10Z,13Z,16Z,19Z-docosahexaenoyl)-sn-glycero-3-phosphate + CoA</text>
        <dbReference type="Rhea" id="RHEA:55300"/>
        <dbReference type="ChEBI" id="CHEBI:57287"/>
        <dbReference type="ChEBI" id="CHEBI:57518"/>
        <dbReference type="ChEBI" id="CHEBI:74298"/>
        <dbReference type="ChEBI" id="CHEBI:82928"/>
    </reaction>
    <physiologicalReaction direction="left-to-right" evidence="1">
        <dbReference type="Rhea" id="RHEA:55301"/>
    </physiologicalReaction>
</comment>
<comment type="catalytic activity">
    <reaction evidence="1">
        <text>1-octadecanoyl-sn-glycero-3-phosphate + (9Z,12Z)-octadecadienoyl-CoA = 1-octadecanoyl-2-(9Z,12Z-octadecadienoyl)-sn-glycero-3-phosphate + CoA</text>
        <dbReference type="Rhea" id="RHEA:55304"/>
        <dbReference type="ChEBI" id="CHEBI:57287"/>
        <dbReference type="ChEBI" id="CHEBI:57383"/>
        <dbReference type="ChEBI" id="CHEBI:74565"/>
        <dbReference type="ChEBI" id="CHEBI:77098"/>
    </reaction>
    <physiologicalReaction direction="left-to-right" evidence="1">
        <dbReference type="Rhea" id="RHEA:55305"/>
    </physiologicalReaction>
</comment>
<comment type="catalytic activity">
    <reaction evidence="1">
        <text>1-octadecanoyl-sn-glycero-3-phosphate + (4Z,7Z,10Z,13Z,16Z,19Z)-docosahexaenoyl-CoA = 1-octadecanoyl-2-(4Z,7Z,10Z,13Z,16Z,19Z-docosahexaenoyl)-sn-glycero-3-phosphate + CoA</text>
        <dbReference type="Rhea" id="RHEA:55308"/>
        <dbReference type="ChEBI" id="CHEBI:57287"/>
        <dbReference type="ChEBI" id="CHEBI:74298"/>
        <dbReference type="ChEBI" id="CHEBI:74565"/>
        <dbReference type="ChEBI" id="CHEBI:77130"/>
    </reaction>
    <physiologicalReaction direction="left-to-right" evidence="1">
        <dbReference type="Rhea" id="RHEA:55309"/>
    </physiologicalReaction>
</comment>
<comment type="catalytic activity">
    <reaction evidence="1">
        <text>(4Z,7Z,10Z,13Z,16Z,19Z)-docosahexaenoyl-CoA + 1-(9Z-octadecenoyl)-sn-glycero-3-phosphate = 1-(9Z-octadecenoyl)-2-(4Z,7Z,10Z,13Z,16Z,19Z-docosahexaenoyl)-sn-glycero-3-phosphate + CoA</text>
        <dbReference type="Rhea" id="RHEA:55312"/>
        <dbReference type="ChEBI" id="CHEBI:57287"/>
        <dbReference type="ChEBI" id="CHEBI:74298"/>
        <dbReference type="ChEBI" id="CHEBI:74544"/>
        <dbReference type="ChEBI" id="CHEBI:138723"/>
    </reaction>
    <physiologicalReaction direction="left-to-right" evidence="1">
        <dbReference type="Rhea" id="RHEA:55313"/>
    </physiologicalReaction>
</comment>
<comment type="pathway">
    <text>Phospholipid metabolism; CDP-diacylglycerol biosynthesis; CDP-diacylglycerol from sn-glycerol 3-phosphate: step 2/3.</text>
</comment>
<comment type="subcellular location">
    <subcellularLocation>
        <location evidence="1">Endoplasmic reticulum membrane</location>
        <topology evidence="3">Multi-pass membrane protein</topology>
    </subcellularLocation>
</comment>
<comment type="domain">
    <text evidence="2">The HXXXXD motif is essential for acyltransferase activity and may constitute the binding site for the phosphate moiety of the glycerol-3-phosphate.</text>
</comment>
<comment type="similarity">
    <text evidence="4">Belongs to the 1-acyl-sn-glycerol-3-phosphate acyltransferase family.</text>
</comment>